<organism>
    <name type="scientific">Vaccinia virus (strain Copenhagen)</name>
    <name type="common">VACV</name>
    <dbReference type="NCBI Taxonomy" id="10249"/>
    <lineage>
        <taxon>Viruses</taxon>
        <taxon>Varidnaviria</taxon>
        <taxon>Bamfordvirae</taxon>
        <taxon>Nucleocytoviricota</taxon>
        <taxon>Pokkesviricetes</taxon>
        <taxon>Chitovirales</taxon>
        <taxon>Poxviridae</taxon>
        <taxon>Chordopoxvirinae</taxon>
        <taxon>Orthopoxvirus</taxon>
        <taxon>Vaccinia virus</taxon>
    </lineage>
</organism>
<keyword id="KW-0002">3D-structure</keyword>
<keyword id="KW-1015">Disulfide bond</keyword>
<keyword id="KW-1032">Host cell membrane</keyword>
<keyword id="KW-1043">Host membrane</keyword>
<keyword id="KW-0945">Host-virus interaction</keyword>
<keyword id="KW-1087">Inhibition of host complement factors by virus</keyword>
<keyword id="KW-0472">Membrane</keyword>
<keyword id="KW-1185">Reference proteome</keyword>
<keyword id="KW-0677">Repeat</keyword>
<keyword id="KW-0964">Secreted</keyword>
<keyword id="KW-0732">Signal</keyword>
<keyword id="KW-0768">Sushi</keyword>
<keyword id="KW-0899">Viral immunoevasion</keyword>
<keyword id="KW-0946">Virion</keyword>
<comment type="function">
    <text>Serves to protect the virus against complement attack by inhibiting both classical and alternative pathways of complement activation. Binds C3b and C4b.</text>
</comment>
<comment type="subunit">
    <text evidence="1">Heterodimer with A56 protein; disulfide-linked.</text>
</comment>
<comment type="subcellular location">
    <subcellularLocation>
        <location evidence="1">Virion membrane</location>
        <topology evidence="1">Peripheral membrane protein</topology>
    </subcellularLocation>
    <subcellularLocation>
        <location evidence="1">Host cell membrane</location>
        <topology evidence="1">Peripheral membrane protein</topology>
        <orientation evidence="1">Extracellular side</orientation>
    </subcellularLocation>
    <subcellularLocation>
        <location evidence="1">Secreted</location>
    </subcellularLocation>
    <text evidence="1">Component of extracellular enveloped virus (EEV) but not intracellular mature virus (IMV). Anchored to the surface of the outermost membrane of EEV via its interaction with A56 protein (By similarity).</text>
</comment>
<comment type="similarity">
    <text evidence="4">Belongs to the receptors of complement activation (RCA) family.</text>
</comment>
<feature type="signal peptide" evidence="1">
    <location>
        <begin position="1"/>
        <end position="19"/>
    </location>
</feature>
<feature type="chain" id="PRO_0000006023" description="Complement control protein C3">
    <location>
        <begin position="20"/>
        <end position="263"/>
    </location>
</feature>
<feature type="domain" description="Sushi 1" evidence="2">
    <location>
        <begin position="20"/>
        <end position="83"/>
    </location>
</feature>
<feature type="domain" description="Sushi 2" evidence="2">
    <location>
        <begin position="84"/>
        <end position="145"/>
    </location>
</feature>
<feature type="domain" description="Sushi 3" evidence="2">
    <location>
        <begin position="146"/>
        <end position="203"/>
    </location>
</feature>
<feature type="domain" description="Sushi 4" evidence="2">
    <location>
        <begin position="204"/>
        <end position="263"/>
    </location>
</feature>
<feature type="disulfide bond" description="Interchain (with C-162 in protein A56)" evidence="2">
    <location>
        <position position="20"/>
    </location>
</feature>
<feature type="disulfide bond" evidence="2">
    <location>
        <begin position="21"/>
        <end position="70"/>
    </location>
</feature>
<feature type="disulfide bond" evidence="2">
    <location>
        <begin position="54"/>
        <end position="81"/>
    </location>
</feature>
<feature type="disulfide bond" evidence="2">
    <location>
        <begin position="86"/>
        <end position="126"/>
    </location>
</feature>
<feature type="disulfide bond" evidence="2">
    <location>
        <begin position="112"/>
        <end position="143"/>
    </location>
</feature>
<feature type="disulfide bond" evidence="2 3">
    <location>
        <begin position="148"/>
        <end position="190"/>
    </location>
</feature>
<feature type="disulfide bond" evidence="2 3">
    <location>
        <begin position="176"/>
        <end position="201"/>
    </location>
</feature>
<feature type="disulfide bond" evidence="2 3">
    <location>
        <begin position="206"/>
        <end position="248"/>
    </location>
</feature>
<feature type="disulfide bond" evidence="2 3">
    <location>
        <begin position="234"/>
        <end position="261"/>
    </location>
</feature>
<feature type="strand" evidence="5">
    <location>
        <begin position="95"/>
        <end position="100"/>
    </location>
</feature>
<feature type="strand" evidence="5">
    <location>
        <begin position="107"/>
        <end position="117"/>
    </location>
</feature>
<feature type="strand" evidence="5">
    <location>
        <begin position="123"/>
        <end position="128"/>
    </location>
</feature>
<feature type="strand" evidence="5">
    <location>
        <begin position="130"/>
        <end position="132"/>
    </location>
</feature>
<feature type="strand" evidence="5">
    <location>
        <begin position="134"/>
        <end position="138"/>
    </location>
</feature>
<feature type="strand" evidence="5">
    <location>
        <begin position="148"/>
        <end position="150"/>
    </location>
</feature>
<feature type="strand" evidence="5">
    <location>
        <begin position="157"/>
        <end position="159"/>
    </location>
</feature>
<feature type="strand" evidence="5">
    <location>
        <begin position="162"/>
        <end position="166"/>
    </location>
</feature>
<feature type="strand" evidence="5">
    <location>
        <begin position="170"/>
        <end position="179"/>
    </location>
</feature>
<feature type="strand" evidence="5">
    <location>
        <begin position="181"/>
        <end position="184"/>
    </location>
</feature>
<feature type="strand" evidence="5">
    <location>
        <begin position="186"/>
        <end position="190"/>
    </location>
</feature>
<feature type="strand" evidence="5">
    <location>
        <begin position="192"/>
        <end position="197"/>
    </location>
</feature>
<feature type="strand" evidence="5">
    <location>
        <begin position="200"/>
        <end position="202"/>
    </location>
</feature>
<dbReference type="EMBL" id="M35027">
    <property type="protein sequence ID" value="AAA47997.1"/>
    <property type="molecule type" value="Genomic_DNA"/>
</dbReference>
<dbReference type="PIR" id="A31005">
    <property type="entry name" value="WMVZSP"/>
</dbReference>
<dbReference type="PDB" id="1E5G">
    <property type="method" value="NMR"/>
    <property type="chains" value="A=84-203"/>
</dbReference>
<dbReference type="PDBsum" id="1E5G"/>
<dbReference type="SMR" id="P68639"/>
<dbReference type="EvolutionaryTrace" id="P68639"/>
<dbReference type="Proteomes" id="UP000008269">
    <property type="component" value="Segment"/>
</dbReference>
<dbReference type="GO" id="GO:0005576">
    <property type="term" value="C:extracellular region"/>
    <property type="evidence" value="ECO:0007669"/>
    <property type="project" value="UniProtKB-SubCell"/>
</dbReference>
<dbReference type="GO" id="GO:0020002">
    <property type="term" value="C:host cell plasma membrane"/>
    <property type="evidence" value="ECO:0007669"/>
    <property type="project" value="UniProtKB-SubCell"/>
</dbReference>
<dbReference type="GO" id="GO:0016020">
    <property type="term" value="C:membrane"/>
    <property type="evidence" value="ECO:0007669"/>
    <property type="project" value="UniProtKB-KW"/>
</dbReference>
<dbReference type="GO" id="GO:0055036">
    <property type="term" value="C:virion membrane"/>
    <property type="evidence" value="ECO:0007669"/>
    <property type="project" value="UniProtKB-SubCell"/>
</dbReference>
<dbReference type="GO" id="GO:0001848">
    <property type="term" value="F:complement binding"/>
    <property type="evidence" value="ECO:0007669"/>
    <property type="project" value="InterPro"/>
</dbReference>
<dbReference type="GO" id="GO:0045916">
    <property type="term" value="P:negative regulation of complement activation"/>
    <property type="evidence" value="ECO:0007669"/>
    <property type="project" value="InterPro"/>
</dbReference>
<dbReference type="GO" id="GO:0042784">
    <property type="term" value="P:symbiont-mediated suppression of host complement activation"/>
    <property type="evidence" value="ECO:0007669"/>
    <property type="project" value="UniProtKB-KW"/>
</dbReference>
<dbReference type="CDD" id="cd00033">
    <property type="entry name" value="CCP"/>
    <property type="match status" value="4"/>
</dbReference>
<dbReference type="FunFam" id="2.10.70.10:FF:000014">
    <property type="entry name" value="Membrane cofactor protein"/>
    <property type="match status" value="1"/>
</dbReference>
<dbReference type="Gene3D" id="2.10.70.10">
    <property type="entry name" value="Complement Module, domain 1"/>
    <property type="match status" value="4"/>
</dbReference>
<dbReference type="InterPro" id="IPR011176">
    <property type="entry name" value="CCP_VACV_C3/B5"/>
</dbReference>
<dbReference type="InterPro" id="IPR051277">
    <property type="entry name" value="SEZ6_CSMD_C4BPB_Regulators"/>
</dbReference>
<dbReference type="InterPro" id="IPR035976">
    <property type="entry name" value="Sushi/SCR/CCP_sf"/>
</dbReference>
<dbReference type="InterPro" id="IPR000436">
    <property type="entry name" value="Sushi_SCR_CCP_dom"/>
</dbReference>
<dbReference type="PANTHER" id="PTHR45656">
    <property type="entry name" value="PROTEIN CBR-CLEC-78"/>
    <property type="match status" value="1"/>
</dbReference>
<dbReference type="PANTHER" id="PTHR45656:SF4">
    <property type="entry name" value="PROTEIN CBR-CLEC-78"/>
    <property type="match status" value="1"/>
</dbReference>
<dbReference type="Pfam" id="PF00084">
    <property type="entry name" value="Sushi"/>
    <property type="match status" value="4"/>
</dbReference>
<dbReference type="PIRSF" id="PIRSF002486">
    <property type="entry name" value="CIP_VAC_C3L"/>
    <property type="match status" value="1"/>
</dbReference>
<dbReference type="SMART" id="SM00032">
    <property type="entry name" value="CCP"/>
    <property type="match status" value="4"/>
</dbReference>
<dbReference type="SUPFAM" id="SSF57535">
    <property type="entry name" value="Complement control module/SCR domain"/>
    <property type="match status" value="4"/>
</dbReference>
<dbReference type="PROSITE" id="PS50923">
    <property type="entry name" value="SUSHI"/>
    <property type="match status" value="4"/>
</dbReference>
<accession>P68639</accession>
<accession>P10998</accession>
<protein>
    <recommendedName>
        <fullName>Complement control protein C3</fullName>
    </recommendedName>
    <alternativeName>
        <fullName>28 kDa protein</fullName>
    </alternativeName>
    <alternativeName>
        <fullName>Secretory protein 35</fullName>
        <shortName>Protein C3</shortName>
    </alternativeName>
    <alternativeName>
        <fullName>VCP</fullName>
    </alternativeName>
</protein>
<evidence type="ECO:0000250" key="1"/>
<evidence type="ECO:0000255" key="2">
    <source>
        <dbReference type="PROSITE-ProRule" id="PRU00302"/>
    </source>
</evidence>
<evidence type="ECO:0000269" key="3">
    <source>
    </source>
</evidence>
<evidence type="ECO:0000305" key="4"/>
<evidence type="ECO:0007829" key="5">
    <source>
        <dbReference type="PDB" id="1E5G"/>
    </source>
</evidence>
<sequence length="263" mass="28629">MKVESVTFLTLLGIGCVLSCCTIPSRPINMKFKNSVETDANANYNIGDTIEYLCLPGYRKQKMGPIYAKCTGTGWTLFNQCIKRRCPSPRDIDNGQLDIGGVDFGSSITYSCNSGYHLIGESKSYCELGSTGSMVWNPEAPICESVKCQSPPSISNGRHNGYEDFYTDGSVVTYSCNSGYSLIGNSGVLCSGGEWSDPPTCQIVKCPHPTISNGYLSSGFKRSYSYNDNVDFKCKYGYKLSGSSSSTCSPGNTWKPELPKCVR</sequence>
<name>VCP_VACCC</name>
<reference key="1">
    <citation type="journal article" date="1990" name="Virology">
        <title>The complete DNA sequence of vaccinia virus.</title>
        <authorList>
            <person name="Goebel S.J."/>
            <person name="Johnson G.P."/>
            <person name="Perkus M.E."/>
            <person name="Davis S.W."/>
            <person name="Winslow J.P."/>
            <person name="Paoletti E."/>
        </authorList>
    </citation>
    <scope>NUCLEOTIDE SEQUENCE [LARGE SCALE GENOMIC DNA]</scope>
</reference>
<reference key="2">
    <citation type="journal article" date="1990" name="Virology">
        <title>Appendix to 'The complete DNA sequence of vaccinia virus'.</title>
        <authorList>
            <person name="Goebel S.J."/>
            <person name="Johnson G.P."/>
            <person name="Perkus M.E."/>
            <person name="Davis S.W."/>
            <person name="Winslow J.P."/>
            <person name="Paoletti E."/>
        </authorList>
    </citation>
    <scope>NUCLEOTIDE SEQUENCE [LARGE SCALE GENOMIC DNA]</scope>
</reference>
<reference key="3">
    <citation type="journal article" date="2001" name="J. Mol. Biol.">
        <title>Solution structure and dynamics of the central CCP module pair of a poxvirus complement control protein.</title>
        <authorList>
            <person name="Henderson C.E."/>
            <person name="Bromek K."/>
            <person name="Mullin N.P."/>
            <person name="Smith B.O."/>
            <person name="Uhrin D."/>
            <person name="Barlow P.N."/>
        </authorList>
    </citation>
    <scope>STRUCTURE BY NMR OF 84-203</scope>
    <scope>DISULFIDE BONDS</scope>
</reference>
<proteinExistence type="evidence at protein level"/>
<gene>
    <name type="ORF">C3L</name>
</gene>
<organismHost>
    <name type="scientific">Homo sapiens</name>
    <name type="common">Human</name>
    <dbReference type="NCBI Taxonomy" id="9606"/>
</organismHost>